<comment type="function">
    <text evidence="1">Necessary for normal cell division and for the maintenance of normal septation.</text>
</comment>
<comment type="cofactor">
    <cofactor evidence="1">
        <name>Mg(2+)</name>
        <dbReference type="ChEBI" id="CHEBI:18420"/>
    </cofactor>
</comment>
<comment type="similarity">
    <text evidence="1">Belongs to the TRAFAC class TrmE-Era-EngA-EngB-Septin-like GTPase superfamily. EngB GTPase family.</text>
</comment>
<protein>
    <recommendedName>
        <fullName evidence="1">Probable GTP-binding protein EngB</fullName>
    </recommendedName>
</protein>
<sequence>MTIRNYNYHMTHFVISAPDIRHLPRDEGIEVAFAGRSNAGKSSALNTLTNQKGLARTSKTPGRTQLINLFEVVDGVRLVDLPGYGYAEVPEEMKLKWQRALGEYLQKRNCLKGLVVLMDIRHPLKDLDQQMITWAVAVGTPVLLLLTKADKLASGARKAQLNLVREAIIPFMGDIQVEAFSSLKKIGVDKLREKLDTWFSEIPPEVMAEEFDGEGE</sequence>
<accession>Q1C237</accession>
<keyword id="KW-0131">Cell cycle</keyword>
<keyword id="KW-0132">Cell division</keyword>
<keyword id="KW-0342">GTP-binding</keyword>
<keyword id="KW-0460">Magnesium</keyword>
<keyword id="KW-0479">Metal-binding</keyword>
<keyword id="KW-0547">Nucleotide-binding</keyword>
<keyword id="KW-0717">Septation</keyword>
<name>ENGB_YERPA</name>
<dbReference type="EMBL" id="CP000308">
    <property type="protein sequence ID" value="ABG15485.1"/>
    <property type="molecule type" value="Genomic_DNA"/>
</dbReference>
<dbReference type="SMR" id="Q1C237"/>
<dbReference type="KEGG" id="ypa:YPA_3523"/>
<dbReference type="Proteomes" id="UP000001971">
    <property type="component" value="Chromosome"/>
</dbReference>
<dbReference type="GO" id="GO:0005829">
    <property type="term" value="C:cytosol"/>
    <property type="evidence" value="ECO:0007669"/>
    <property type="project" value="TreeGrafter"/>
</dbReference>
<dbReference type="GO" id="GO:0005525">
    <property type="term" value="F:GTP binding"/>
    <property type="evidence" value="ECO:0007669"/>
    <property type="project" value="UniProtKB-UniRule"/>
</dbReference>
<dbReference type="GO" id="GO:0046872">
    <property type="term" value="F:metal ion binding"/>
    <property type="evidence" value="ECO:0007669"/>
    <property type="project" value="UniProtKB-KW"/>
</dbReference>
<dbReference type="GO" id="GO:0000917">
    <property type="term" value="P:division septum assembly"/>
    <property type="evidence" value="ECO:0007669"/>
    <property type="project" value="UniProtKB-KW"/>
</dbReference>
<dbReference type="CDD" id="cd01876">
    <property type="entry name" value="YihA_EngB"/>
    <property type="match status" value="1"/>
</dbReference>
<dbReference type="FunFam" id="3.40.50.300:FF:000098">
    <property type="entry name" value="Probable GTP-binding protein EngB"/>
    <property type="match status" value="1"/>
</dbReference>
<dbReference type="Gene3D" id="3.40.50.300">
    <property type="entry name" value="P-loop containing nucleotide triphosphate hydrolases"/>
    <property type="match status" value="1"/>
</dbReference>
<dbReference type="HAMAP" id="MF_00321">
    <property type="entry name" value="GTPase_EngB"/>
    <property type="match status" value="1"/>
</dbReference>
<dbReference type="InterPro" id="IPR030393">
    <property type="entry name" value="G_ENGB_dom"/>
</dbReference>
<dbReference type="InterPro" id="IPR006073">
    <property type="entry name" value="GTP-bd"/>
</dbReference>
<dbReference type="InterPro" id="IPR019987">
    <property type="entry name" value="GTP-bd_ribosome_bio_YsxC"/>
</dbReference>
<dbReference type="InterPro" id="IPR027417">
    <property type="entry name" value="P-loop_NTPase"/>
</dbReference>
<dbReference type="NCBIfam" id="TIGR03598">
    <property type="entry name" value="GTPase_YsxC"/>
    <property type="match status" value="1"/>
</dbReference>
<dbReference type="PANTHER" id="PTHR11649:SF13">
    <property type="entry name" value="ENGB-TYPE G DOMAIN-CONTAINING PROTEIN"/>
    <property type="match status" value="1"/>
</dbReference>
<dbReference type="PANTHER" id="PTHR11649">
    <property type="entry name" value="MSS1/TRME-RELATED GTP-BINDING PROTEIN"/>
    <property type="match status" value="1"/>
</dbReference>
<dbReference type="Pfam" id="PF01926">
    <property type="entry name" value="MMR_HSR1"/>
    <property type="match status" value="1"/>
</dbReference>
<dbReference type="SUPFAM" id="SSF52540">
    <property type="entry name" value="P-loop containing nucleoside triphosphate hydrolases"/>
    <property type="match status" value="1"/>
</dbReference>
<dbReference type="PROSITE" id="PS51706">
    <property type="entry name" value="G_ENGB"/>
    <property type="match status" value="1"/>
</dbReference>
<gene>
    <name evidence="1" type="primary">engB</name>
    <name type="ordered locus">YPA_3523</name>
</gene>
<feature type="chain" id="PRO_0000266983" description="Probable GTP-binding protein EngB">
    <location>
        <begin position="1"/>
        <end position="216"/>
    </location>
</feature>
<feature type="domain" description="EngB-type G" evidence="1">
    <location>
        <begin position="27"/>
        <end position="201"/>
    </location>
</feature>
<feature type="binding site" evidence="1">
    <location>
        <begin position="35"/>
        <end position="42"/>
    </location>
    <ligand>
        <name>GTP</name>
        <dbReference type="ChEBI" id="CHEBI:37565"/>
    </ligand>
</feature>
<feature type="binding site" evidence="1">
    <location>
        <position position="42"/>
    </location>
    <ligand>
        <name>Mg(2+)</name>
        <dbReference type="ChEBI" id="CHEBI:18420"/>
    </ligand>
</feature>
<feature type="binding site" evidence="1">
    <location>
        <begin position="62"/>
        <end position="66"/>
    </location>
    <ligand>
        <name>GTP</name>
        <dbReference type="ChEBI" id="CHEBI:37565"/>
    </ligand>
</feature>
<feature type="binding site" evidence="1">
    <location>
        <position position="64"/>
    </location>
    <ligand>
        <name>Mg(2+)</name>
        <dbReference type="ChEBI" id="CHEBI:18420"/>
    </ligand>
</feature>
<feature type="binding site" evidence="1">
    <location>
        <begin position="80"/>
        <end position="83"/>
    </location>
    <ligand>
        <name>GTP</name>
        <dbReference type="ChEBI" id="CHEBI:37565"/>
    </ligand>
</feature>
<feature type="binding site" evidence="1">
    <location>
        <begin position="147"/>
        <end position="150"/>
    </location>
    <ligand>
        <name>GTP</name>
        <dbReference type="ChEBI" id="CHEBI:37565"/>
    </ligand>
</feature>
<feature type="binding site" evidence="1">
    <location>
        <begin position="180"/>
        <end position="182"/>
    </location>
    <ligand>
        <name>GTP</name>
        <dbReference type="ChEBI" id="CHEBI:37565"/>
    </ligand>
</feature>
<evidence type="ECO:0000255" key="1">
    <source>
        <dbReference type="HAMAP-Rule" id="MF_00321"/>
    </source>
</evidence>
<reference key="1">
    <citation type="journal article" date="2006" name="J. Bacteriol.">
        <title>Complete genome sequence of Yersinia pestis strains Antiqua and Nepal516: evidence of gene reduction in an emerging pathogen.</title>
        <authorList>
            <person name="Chain P.S.G."/>
            <person name="Hu P."/>
            <person name="Malfatti S.A."/>
            <person name="Radnedge L."/>
            <person name="Larimer F."/>
            <person name="Vergez L.M."/>
            <person name="Worsham P."/>
            <person name="Chu M.C."/>
            <person name="Andersen G.L."/>
        </authorList>
    </citation>
    <scope>NUCLEOTIDE SEQUENCE [LARGE SCALE GENOMIC DNA]</scope>
    <source>
        <strain>Antiqua</strain>
    </source>
</reference>
<organism>
    <name type="scientific">Yersinia pestis bv. Antiqua (strain Antiqua)</name>
    <dbReference type="NCBI Taxonomy" id="360102"/>
    <lineage>
        <taxon>Bacteria</taxon>
        <taxon>Pseudomonadati</taxon>
        <taxon>Pseudomonadota</taxon>
        <taxon>Gammaproteobacteria</taxon>
        <taxon>Enterobacterales</taxon>
        <taxon>Yersiniaceae</taxon>
        <taxon>Yersinia</taxon>
    </lineage>
</organism>
<proteinExistence type="inferred from homology"/>